<organism>
    <name type="scientific">Cutibacterium acnes (strain DSM 16379 / KPA171202)</name>
    <name type="common">Propionibacterium acnes</name>
    <dbReference type="NCBI Taxonomy" id="267747"/>
    <lineage>
        <taxon>Bacteria</taxon>
        <taxon>Bacillati</taxon>
        <taxon>Actinomycetota</taxon>
        <taxon>Actinomycetes</taxon>
        <taxon>Propionibacteriales</taxon>
        <taxon>Propionibacteriaceae</taxon>
        <taxon>Cutibacterium</taxon>
    </lineage>
</organism>
<protein>
    <recommendedName>
        <fullName evidence="1">tRNA pseudouridine synthase B</fullName>
        <ecNumber evidence="1">5.4.99.25</ecNumber>
    </recommendedName>
    <alternativeName>
        <fullName evidence="1">tRNA pseudouridine(55) synthase</fullName>
        <shortName evidence="1">Psi55 synthase</shortName>
    </alternativeName>
    <alternativeName>
        <fullName evidence="1">tRNA pseudouridylate synthase</fullName>
    </alternativeName>
    <alternativeName>
        <fullName evidence="1">tRNA-uridine isomerase</fullName>
    </alternativeName>
</protein>
<gene>
    <name evidence="1" type="primary">truB</name>
    <name type="ordered locus">PPA1478</name>
</gene>
<proteinExistence type="inferred from homology"/>
<evidence type="ECO:0000255" key="1">
    <source>
        <dbReference type="HAMAP-Rule" id="MF_01080"/>
    </source>
</evidence>
<reference key="1">
    <citation type="journal article" date="2004" name="Science">
        <title>The complete genome sequence of Propionibacterium acnes, a commensal of human skin.</title>
        <authorList>
            <person name="Brueggemann H."/>
            <person name="Henne A."/>
            <person name="Hoster F."/>
            <person name="Liesegang H."/>
            <person name="Wiezer A."/>
            <person name="Strittmatter A."/>
            <person name="Hujer S."/>
            <person name="Duerre P."/>
            <person name="Gottschalk G."/>
        </authorList>
    </citation>
    <scope>NUCLEOTIDE SEQUENCE [LARGE SCALE GENOMIC DNA]</scope>
    <source>
        <strain>DSM 16379 / KPA171202</strain>
    </source>
</reference>
<sequence length="295" mass="31072">MNTLQSGVLVVDKPAGVTSHQVVGRVRRLMGTRKVGHAGTLDPMASGVLVVGVNRATRLLGHLSLHDKDYTATVRLGVGTVTDDAEGDVTVTTDASAIDDRAIHAAMVRQTGEIQQVPAAVSAIKVNGRRAYAKVRAGEDVVLRPRAVTVSRFEAIAIRRHGQVIDVDVEATCSSGTYVRALARDVGADLGVGGHLTALRRTRVGPFDLTAACVDIFAQDAVTPTPMTMAEAAALSFPVVHVTADQAAAIRVGRRLSFTVPAEVTAIIAETGELLALYRPDDEKDGQSRAICVLV</sequence>
<accession>Q6A7P0</accession>
<comment type="function">
    <text evidence="1">Responsible for synthesis of pseudouridine from uracil-55 in the psi GC loop of transfer RNAs.</text>
</comment>
<comment type="catalytic activity">
    <reaction evidence="1">
        <text>uridine(55) in tRNA = pseudouridine(55) in tRNA</text>
        <dbReference type="Rhea" id="RHEA:42532"/>
        <dbReference type="Rhea" id="RHEA-COMP:10101"/>
        <dbReference type="Rhea" id="RHEA-COMP:10102"/>
        <dbReference type="ChEBI" id="CHEBI:65314"/>
        <dbReference type="ChEBI" id="CHEBI:65315"/>
        <dbReference type="EC" id="5.4.99.25"/>
    </reaction>
</comment>
<comment type="similarity">
    <text evidence="1">Belongs to the pseudouridine synthase TruB family. Type 1 subfamily.</text>
</comment>
<dbReference type="EC" id="5.4.99.25" evidence="1"/>
<dbReference type="EMBL" id="AE017283">
    <property type="protein sequence ID" value="AAT83225.1"/>
    <property type="molecule type" value="Genomic_DNA"/>
</dbReference>
<dbReference type="RefSeq" id="WP_002518429.1">
    <property type="nucleotide sequence ID" value="NZ_CP025935.1"/>
</dbReference>
<dbReference type="SMR" id="Q6A7P0"/>
<dbReference type="EnsemblBacteria" id="AAT83225">
    <property type="protein sequence ID" value="AAT83225"/>
    <property type="gene ID" value="PPA1478"/>
</dbReference>
<dbReference type="KEGG" id="pac:PPA1478"/>
<dbReference type="eggNOG" id="COG0130">
    <property type="taxonomic scope" value="Bacteria"/>
</dbReference>
<dbReference type="HOGENOM" id="CLU_032087_0_0_11"/>
<dbReference type="Proteomes" id="UP000000603">
    <property type="component" value="Chromosome"/>
</dbReference>
<dbReference type="GO" id="GO:0003723">
    <property type="term" value="F:RNA binding"/>
    <property type="evidence" value="ECO:0007669"/>
    <property type="project" value="InterPro"/>
</dbReference>
<dbReference type="GO" id="GO:0160148">
    <property type="term" value="F:tRNA pseudouridine(55) synthase activity"/>
    <property type="evidence" value="ECO:0007669"/>
    <property type="project" value="UniProtKB-EC"/>
</dbReference>
<dbReference type="GO" id="GO:1990481">
    <property type="term" value="P:mRNA pseudouridine synthesis"/>
    <property type="evidence" value="ECO:0007669"/>
    <property type="project" value="TreeGrafter"/>
</dbReference>
<dbReference type="GO" id="GO:0031119">
    <property type="term" value="P:tRNA pseudouridine synthesis"/>
    <property type="evidence" value="ECO:0007669"/>
    <property type="project" value="UniProtKB-UniRule"/>
</dbReference>
<dbReference type="CDD" id="cd02573">
    <property type="entry name" value="PseudoU_synth_EcTruB"/>
    <property type="match status" value="1"/>
</dbReference>
<dbReference type="Gene3D" id="3.30.2350.10">
    <property type="entry name" value="Pseudouridine synthase"/>
    <property type="match status" value="1"/>
</dbReference>
<dbReference type="Gene3D" id="2.30.130.10">
    <property type="entry name" value="PUA domain"/>
    <property type="match status" value="1"/>
</dbReference>
<dbReference type="HAMAP" id="MF_01080">
    <property type="entry name" value="TruB_bact"/>
    <property type="match status" value="1"/>
</dbReference>
<dbReference type="InterPro" id="IPR020103">
    <property type="entry name" value="PsdUridine_synth_cat_dom_sf"/>
</dbReference>
<dbReference type="InterPro" id="IPR002501">
    <property type="entry name" value="PsdUridine_synth_N"/>
</dbReference>
<dbReference type="InterPro" id="IPR036974">
    <property type="entry name" value="PUA_sf"/>
</dbReference>
<dbReference type="InterPro" id="IPR015225">
    <property type="entry name" value="tRNA_psdUridine_synth_fam2_C"/>
</dbReference>
<dbReference type="InterPro" id="IPR014780">
    <property type="entry name" value="tRNA_psdUridine_synth_TruB"/>
</dbReference>
<dbReference type="InterPro" id="IPR032819">
    <property type="entry name" value="TruB_C"/>
</dbReference>
<dbReference type="NCBIfam" id="TIGR00431">
    <property type="entry name" value="TruB"/>
    <property type="match status" value="1"/>
</dbReference>
<dbReference type="PANTHER" id="PTHR13767:SF2">
    <property type="entry name" value="PSEUDOURIDYLATE SYNTHASE TRUB1"/>
    <property type="match status" value="1"/>
</dbReference>
<dbReference type="PANTHER" id="PTHR13767">
    <property type="entry name" value="TRNA-PSEUDOURIDINE SYNTHASE"/>
    <property type="match status" value="1"/>
</dbReference>
<dbReference type="Pfam" id="PF09142">
    <property type="entry name" value="TruB_C"/>
    <property type="match status" value="1"/>
</dbReference>
<dbReference type="Pfam" id="PF16198">
    <property type="entry name" value="TruB_C_2"/>
    <property type="match status" value="1"/>
</dbReference>
<dbReference type="Pfam" id="PF01509">
    <property type="entry name" value="TruB_N"/>
    <property type="match status" value="1"/>
</dbReference>
<dbReference type="SUPFAM" id="SSF55120">
    <property type="entry name" value="Pseudouridine synthase"/>
    <property type="match status" value="1"/>
</dbReference>
<keyword id="KW-0413">Isomerase</keyword>
<keyword id="KW-0819">tRNA processing</keyword>
<name>TRUB_CUTAK</name>
<feature type="chain" id="PRO_0000121884" description="tRNA pseudouridine synthase B">
    <location>
        <begin position="1"/>
        <end position="295"/>
    </location>
</feature>
<feature type="active site" description="Nucleophile" evidence="1">
    <location>
        <position position="42"/>
    </location>
</feature>